<sequence>MKVTLPDFRRAGVLVVGDVMLDRYWYGPTCRISPEAPVPVVKVDTIEERPGGAANVAMNIASLGAVARLVGLTGIDDAARALICKLSEVRVRCDFVSVPTHPTITKLRVLSRNQQLIRLDFEEGFDGVDPTPIFERIQLALPQIGALVLSDYAKGALNSVQPMIQLARKANVPVLIDPKGSDFERYRGATLLTPNLSEFEAVVGRCKNEEELVNRGMQLVADFELSALLVTRSEQGMTLLQLGKPPLHLPTQAKEVFDVTGAGDTVIGVLAAALAAGNSLEESCFLANAAAGVVVGKLGTSTVSPIELENAIRGRAETGFGVMDEQQLKIAVAQARQRGEKVVMTNGIFDILHAGHVSYLANARKLGDRLIVAVNSDASTKRLKGEKRPVNPLEQRMVVLGALEAVDWVVPFEEDTPQRLIADILPDLLVKGGDYKPHEIAGSEEVWAAGGEVKVLNFEDGVSTTNIIQSIKNGRG</sequence>
<comment type="function">
    <text evidence="1">Catalyzes the phosphorylation of D-glycero-D-manno-heptose 7-phosphate at the C-1 position to selectively form D-glycero-beta-D-manno-heptose-1,7-bisphosphate.</text>
</comment>
<comment type="function">
    <text evidence="1">Catalyzes the ADP transfer from ATP to D-glycero-beta-D-manno-heptose 1-phosphate, yielding ADP-D-glycero-beta-D-manno-heptose.</text>
</comment>
<comment type="catalytic activity">
    <reaction evidence="1">
        <text>D-glycero-beta-D-manno-heptose 7-phosphate + ATP = D-glycero-beta-D-manno-heptose 1,7-bisphosphate + ADP + H(+)</text>
        <dbReference type="Rhea" id="RHEA:27473"/>
        <dbReference type="ChEBI" id="CHEBI:15378"/>
        <dbReference type="ChEBI" id="CHEBI:30616"/>
        <dbReference type="ChEBI" id="CHEBI:60204"/>
        <dbReference type="ChEBI" id="CHEBI:60208"/>
        <dbReference type="ChEBI" id="CHEBI:456216"/>
        <dbReference type="EC" id="2.7.1.167"/>
    </reaction>
</comment>
<comment type="catalytic activity">
    <reaction evidence="1">
        <text>D-glycero-beta-D-manno-heptose 1-phosphate + ATP + H(+) = ADP-D-glycero-beta-D-manno-heptose + diphosphate</text>
        <dbReference type="Rhea" id="RHEA:27465"/>
        <dbReference type="ChEBI" id="CHEBI:15378"/>
        <dbReference type="ChEBI" id="CHEBI:30616"/>
        <dbReference type="ChEBI" id="CHEBI:33019"/>
        <dbReference type="ChEBI" id="CHEBI:59967"/>
        <dbReference type="ChEBI" id="CHEBI:61593"/>
        <dbReference type="EC" id="2.7.7.70"/>
    </reaction>
</comment>
<comment type="pathway">
    <text evidence="1">Nucleotide-sugar biosynthesis; ADP-L-glycero-beta-D-manno-heptose biosynthesis; ADP-L-glycero-beta-D-manno-heptose from D-glycero-beta-D-manno-heptose 7-phosphate: step 1/4.</text>
</comment>
<comment type="pathway">
    <text evidence="1">Nucleotide-sugar biosynthesis; ADP-L-glycero-beta-D-manno-heptose biosynthesis; ADP-L-glycero-beta-D-manno-heptose from D-glycero-beta-D-manno-heptose 7-phosphate: step 3/4.</text>
</comment>
<comment type="subunit">
    <text evidence="1">Homodimer.</text>
</comment>
<comment type="similarity">
    <text evidence="1">In the N-terminal section; belongs to the carbohydrate kinase PfkB family.</text>
</comment>
<comment type="similarity">
    <text evidence="1">In the C-terminal section; belongs to the cytidylyltransferase family.</text>
</comment>
<organism>
    <name type="scientific">Yersinia pestis bv. Antiqua (strain Nepal516)</name>
    <dbReference type="NCBI Taxonomy" id="377628"/>
    <lineage>
        <taxon>Bacteria</taxon>
        <taxon>Pseudomonadati</taxon>
        <taxon>Pseudomonadota</taxon>
        <taxon>Gammaproteobacteria</taxon>
        <taxon>Enterobacterales</taxon>
        <taxon>Yersiniaceae</taxon>
        <taxon>Yersinia</taxon>
    </lineage>
</organism>
<reference key="1">
    <citation type="journal article" date="2006" name="J. Bacteriol.">
        <title>Complete genome sequence of Yersinia pestis strains Antiqua and Nepal516: evidence of gene reduction in an emerging pathogen.</title>
        <authorList>
            <person name="Chain P.S.G."/>
            <person name="Hu P."/>
            <person name="Malfatti S.A."/>
            <person name="Radnedge L."/>
            <person name="Larimer F."/>
            <person name="Vergez L.M."/>
            <person name="Worsham P."/>
            <person name="Chu M.C."/>
            <person name="Andersen G.L."/>
        </authorList>
    </citation>
    <scope>NUCLEOTIDE SEQUENCE [LARGE SCALE GENOMIC DNA]</scope>
    <source>
        <strain>Nepal516</strain>
    </source>
</reference>
<reference key="2">
    <citation type="submission" date="2009-04" db="EMBL/GenBank/DDBJ databases">
        <title>Yersinia pestis Nepal516A whole genome shotgun sequencing project.</title>
        <authorList>
            <person name="Plunkett G. III"/>
            <person name="Anderson B.D."/>
            <person name="Baumler D.J."/>
            <person name="Burland V."/>
            <person name="Cabot E.L."/>
            <person name="Glasner J.D."/>
            <person name="Mau B."/>
            <person name="Neeno-Eckwall E."/>
            <person name="Perna N.T."/>
            <person name="Munk A.C."/>
            <person name="Tapia R."/>
            <person name="Green L.D."/>
            <person name="Rogers Y.C."/>
            <person name="Detter J.C."/>
            <person name="Bruce D.C."/>
            <person name="Brettin T.S."/>
        </authorList>
    </citation>
    <scope>NUCLEOTIDE SEQUENCE [LARGE SCALE GENOMIC DNA]</scope>
    <source>
        <strain>Nepal516</strain>
    </source>
</reference>
<dbReference type="EC" id="2.7.1.167" evidence="1"/>
<dbReference type="EC" id="2.7.7.70" evidence="1"/>
<dbReference type="EMBL" id="CP000305">
    <property type="protein sequence ID" value="ABG16846.1"/>
    <property type="molecule type" value="Genomic_DNA"/>
</dbReference>
<dbReference type="EMBL" id="ACNQ01000006">
    <property type="protein sequence ID" value="EEO78304.1"/>
    <property type="molecule type" value="Genomic_DNA"/>
</dbReference>
<dbReference type="RefSeq" id="WP_002212193.1">
    <property type="nucleotide sequence ID" value="NZ_ACNQ01000006.1"/>
</dbReference>
<dbReference type="SMR" id="Q1CMD4"/>
<dbReference type="GeneID" id="57973970"/>
<dbReference type="KEGG" id="ypn:YPN_0514"/>
<dbReference type="HOGENOM" id="CLU_021150_2_1_6"/>
<dbReference type="UniPathway" id="UPA00356">
    <property type="reaction ID" value="UER00437"/>
</dbReference>
<dbReference type="UniPathway" id="UPA00356">
    <property type="reaction ID" value="UER00439"/>
</dbReference>
<dbReference type="Proteomes" id="UP000008936">
    <property type="component" value="Chromosome"/>
</dbReference>
<dbReference type="GO" id="GO:0005829">
    <property type="term" value="C:cytosol"/>
    <property type="evidence" value="ECO:0007669"/>
    <property type="project" value="TreeGrafter"/>
</dbReference>
<dbReference type="GO" id="GO:0005524">
    <property type="term" value="F:ATP binding"/>
    <property type="evidence" value="ECO:0007669"/>
    <property type="project" value="UniProtKB-UniRule"/>
</dbReference>
<dbReference type="GO" id="GO:0033785">
    <property type="term" value="F:heptose 7-phosphate kinase activity"/>
    <property type="evidence" value="ECO:0007669"/>
    <property type="project" value="UniProtKB-UniRule"/>
</dbReference>
<dbReference type="GO" id="GO:0033786">
    <property type="term" value="F:heptose-1-phosphate adenylyltransferase activity"/>
    <property type="evidence" value="ECO:0007669"/>
    <property type="project" value="UniProtKB-UniRule"/>
</dbReference>
<dbReference type="GO" id="GO:0016773">
    <property type="term" value="F:phosphotransferase activity, alcohol group as acceptor"/>
    <property type="evidence" value="ECO:0007669"/>
    <property type="project" value="InterPro"/>
</dbReference>
<dbReference type="GO" id="GO:0097171">
    <property type="term" value="P:ADP-L-glycero-beta-D-manno-heptose biosynthetic process"/>
    <property type="evidence" value="ECO:0007669"/>
    <property type="project" value="UniProtKB-UniPathway"/>
</dbReference>
<dbReference type="CDD" id="cd01172">
    <property type="entry name" value="RfaE_like"/>
    <property type="match status" value="1"/>
</dbReference>
<dbReference type="FunFam" id="3.40.1190.20:FF:000002">
    <property type="entry name" value="Bifunctional protein HldE"/>
    <property type="match status" value="1"/>
</dbReference>
<dbReference type="FunFam" id="3.40.50.620:FF:000028">
    <property type="entry name" value="Bifunctional protein HldE"/>
    <property type="match status" value="1"/>
</dbReference>
<dbReference type="Gene3D" id="3.40.1190.20">
    <property type="match status" value="1"/>
</dbReference>
<dbReference type="Gene3D" id="3.40.50.620">
    <property type="entry name" value="HUPs"/>
    <property type="match status" value="1"/>
</dbReference>
<dbReference type="HAMAP" id="MF_01603">
    <property type="entry name" value="HldE"/>
    <property type="match status" value="1"/>
</dbReference>
<dbReference type="InterPro" id="IPR023030">
    <property type="entry name" value="Bifunc_HldE"/>
</dbReference>
<dbReference type="InterPro" id="IPR002173">
    <property type="entry name" value="Carboh/pur_kinase_PfkB_CS"/>
</dbReference>
<dbReference type="InterPro" id="IPR004821">
    <property type="entry name" value="Cyt_trans-like"/>
</dbReference>
<dbReference type="InterPro" id="IPR011611">
    <property type="entry name" value="PfkB_dom"/>
</dbReference>
<dbReference type="InterPro" id="IPR011913">
    <property type="entry name" value="RfaE_dom_I"/>
</dbReference>
<dbReference type="InterPro" id="IPR011914">
    <property type="entry name" value="RfaE_dom_II"/>
</dbReference>
<dbReference type="InterPro" id="IPR029056">
    <property type="entry name" value="Ribokinase-like"/>
</dbReference>
<dbReference type="InterPro" id="IPR014729">
    <property type="entry name" value="Rossmann-like_a/b/a_fold"/>
</dbReference>
<dbReference type="NCBIfam" id="TIGR00125">
    <property type="entry name" value="cyt_tran_rel"/>
    <property type="match status" value="1"/>
</dbReference>
<dbReference type="NCBIfam" id="NF008454">
    <property type="entry name" value="PRK11316.1"/>
    <property type="match status" value="1"/>
</dbReference>
<dbReference type="NCBIfam" id="TIGR02198">
    <property type="entry name" value="rfaE_dom_I"/>
    <property type="match status" value="1"/>
</dbReference>
<dbReference type="NCBIfam" id="TIGR02199">
    <property type="entry name" value="rfaE_dom_II"/>
    <property type="match status" value="1"/>
</dbReference>
<dbReference type="PANTHER" id="PTHR46969">
    <property type="entry name" value="BIFUNCTIONAL PROTEIN HLDE"/>
    <property type="match status" value="1"/>
</dbReference>
<dbReference type="PANTHER" id="PTHR46969:SF1">
    <property type="entry name" value="BIFUNCTIONAL PROTEIN HLDE"/>
    <property type="match status" value="1"/>
</dbReference>
<dbReference type="Pfam" id="PF01467">
    <property type="entry name" value="CTP_transf_like"/>
    <property type="match status" value="1"/>
</dbReference>
<dbReference type="Pfam" id="PF00294">
    <property type="entry name" value="PfkB"/>
    <property type="match status" value="1"/>
</dbReference>
<dbReference type="SUPFAM" id="SSF52374">
    <property type="entry name" value="Nucleotidylyl transferase"/>
    <property type="match status" value="1"/>
</dbReference>
<dbReference type="SUPFAM" id="SSF53613">
    <property type="entry name" value="Ribokinase-like"/>
    <property type="match status" value="1"/>
</dbReference>
<dbReference type="PROSITE" id="PS00583">
    <property type="entry name" value="PFKB_KINASES_1"/>
    <property type="match status" value="1"/>
</dbReference>
<gene>
    <name evidence="1" type="primary">hldE</name>
    <name type="ordered locus">YPN_0514</name>
    <name type="ORF">YP516_0534</name>
</gene>
<accession>Q1CMD4</accession>
<accession>C4GP72</accession>
<evidence type="ECO:0000255" key="1">
    <source>
        <dbReference type="HAMAP-Rule" id="MF_01603"/>
    </source>
</evidence>
<name>HLDE_YERPN</name>
<protein>
    <recommendedName>
        <fullName evidence="1">Bifunctional protein HldE</fullName>
    </recommendedName>
    <domain>
        <recommendedName>
            <fullName evidence="1">D-beta-D-heptose 7-phosphate kinase</fullName>
            <ecNumber evidence="1">2.7.1.167</ecNumber>
        </recommendedName>
        <alternativeName>
            <fullName evidence="1">D-beta-D-heptose 7-phosphotransferase</fullName>
        </alternativeName>
        <alternativeName>
            <fullName evidence="1">D-glycero-beta-D-manno-heptose-7-phosphate kinase</fullName>
        </alternativeName>
    </domain>
    <domain>
        <recommendedName>
            <fullName evidence="1">D-beta-D-heptose 1-phosphate adenylyltransferase</fullName>
            <ecNumber evidence="1">2.7.7.70</ecNumber>
        </recommendedName>
        <alternativeName>
            <fullName evidence="1">D-glycero-beta-D-manno-heptose 1-phosphate adenylyltransferase</fullName>
        </alternativeName>
    </domain>
</protein>
<feature type="chain" id="PRO_0000255790" description="Bifunctional protein HldE">
    <location>
        <begin position="1"/>
        <end position="476"/>
    </location>
</feature>
<feature type="region of interest" description="Ribokinase">
    <location>
        <begin position="1"/>
        <end position="318"/>
    </location>
</feature>
<feature type="region of interest" description="Cytidylyltransferase">
    <location>
        <begin position="344"/>
        <end position="476"/>
    </location>
</feature>
<feature type="active site" evidence="1">
    <location>
        <position position="264"/>
    </location>
</feature>
<feature type="binding site" evidence="1">
    <location>
        <begin position="195"/>
        <end position="198"/>
    </location>
    <ligand>
        <name>ATP</name>
        <dbReference type="ChEBI" id="CHEBI:30616"/>
    </ligand>
</feature>
<keyword id="KW-0067">ATP-binding</keyword>
<keyword id="KW-0119">Carbohydrate metabolism</keyword>
<keyword id="KW-0418">Kinase</keyword>
<keyword id="KW-0511">Multifunctional enzyme</keyword>
<keyword id="KW-0547">Nucleotide-binding</keyword>
<keyword id="KW-0548">Nucleotidyltransferase</keyword>
<keyword id="KW-0808">Transferase</keyword>
<proteinExistence type="inferred from homology"/>